<protein>
    <recommendedName>
        <fullName evidence="1">Phosphoglucosamine mutase</fullName>
        <ecNumber evidence="1">5.4.2.10</ecNumber>
    </recommendedName>
</protein>
<proteinExistence type="inferred from homology"/>
<comment type="function">
    <text evidence="1">Catalyzes the conversion of glucosamine-6-phosphate to glucosamine-1-phosphate.</text>
</comment>
<comment type="catalytic activity">
    <reaction evidence="1">
        <text>alpha-D-glucosamine 1-phosphate = D-glucosamine 6-phosphate</text>
        <dbReference type="Rhea" id="RHEA:23424"/>
        <dbReference type="ChEBI" id="CHEBI:58516"/>
        <dbReference type="ChEBI" id="CHEBI:58725"/>
        <dbReference type="EC" id="5.4.2.10"/>
    </reaction>
</comment>
<comment type="cofactor">
    <cofactor evidence="1">
        <name>Mg(2+)</name>
        <dbReference type="ChEBI" id="CHEBI:18420"/>
    </cofactor>
    <text evidence="1">Binds 1 Mg(2+) ion per subunit.</text>
</comment>
<comment type="PTM">
    <text evidence="1">Activated by phosphorylation.</text>
</comment>
<comment type="similarity">
    <text evidence="1">Belongs to the phosphohexose mutase family.</text>
</comment>
<evidence type="ECO:0000255" key="1">
    <source>
        <dbReference type="HAMAP-Rule" id="MF_01554"/>
    </source>
</evidence>
<reference key="1">
    <citation type="submission" date="2007-05" db="EMBL/GenBank/DDBJ databases">
        <title>Complete sequence of chromosome of Psychrobacter sp. PRwf-1.</title>
        <authorList>
            <consortium name="US DOE Joint Genome Institute"/>
            <person name="Copeland A."/>
            <person name="Lucas S."/>
            <person name="Lapidus A."/>
            <person name="Barry K."/>
            <person name="Detter J.C."/>
            <person name="Glavina del Rio T."/>
            <person name="Hammon N."/>
            <person name="Israni S."/>
            <person name="Dalin E."/>
            <person name="Tice H."/>
            <person name="Pitluck S."/>
            <person name="Chain P."/>
            <person name="Malfatti S."/>
            <person name="Shin M."/>
            <person name="Vergez L."/>
            <person name="Schmutz J."/>
            <person name="Larimer F."/>
            <person name="Land M."/>
            <person name="Hauser L."/>
            <person name="Kyrpides N."/>
            <person name="Kim E."/>
            <person name="Tiedje J."/>
            <person name="Richardson P."/>
        </authorList>
    </citation>
    <scope>NUCLEOTIDE SEQUENCE [LARGE SCALE GENOMIC DNA]</scope>
    <source>
        <strain>PRwf-1</strain>
    </source>
</reference>
<gene>
    <name evidence="1" type="primary">glmM</name>
    <name type="ordered locus">PsycPRwf_1260</name>
</gene>
<sequence>MSYFGTDGIRGLFGKFPITPDFVLKLGYVTGQVLVEQNPNPKKKPSVVIGKDTRLSGYVIEAALQAGFNSAGVDVHMIGPLPTPAIAHLTRSFHADAGVVISASHNPYYDNGIKFFAADGRKLSDEMQNAINDKLKTVVEGHADYTQDDPAQLGKHFRINDAKGRYIEFCKGSFPYQYDLSNLTVVIDCANGAGYSVGPRVLRELGANVIAIHNKPNGININDNCGSTHPETLQKAVLEHKADVGIALDGDGDRIIMVDEKGVVVDGDGILYILATKSEAKAEGVVGTQMSNMGLQLALEAAGIALERAKVGDRYVMQGLEAKGWILGGEPSGHILCLDKSRTGDAIIAGLQVLAVMAQTQKSLSQLTEGFKLLPQCLVNVRLEQMQDPYDFPELVAAFEAASKQIEGRGRILIRKSGTEPLIRVMVELDNAEECDKLAHELADKVKQVMA</sequence>
<name>GLMM_PSYWF</name>
<feature type="chain" id="PRO_1000073575" description="Phosphoglucosamine mutase">
    <location>
        <begin position="1"/>
        <end position="451"/>
    </location>
</feature>
<feature type="active site" description="Phosphoserine intermediate" evidence="1">
    <location>
        <position position="104"/>
    </location>
</feature>
<feature type="binding site" description="via phosphate group" evidence="1">
    <location>
        <position position="104"/>
    </location>
    <ligand>
        <name>Mg(2+)</name>
        <dbReference type="ChEBI" id="CHEBI:18420"/>
    </ligand>
</feature>
<feature type="binding site" evidence="1">
    <location>
        <position position="249"/>
    </location>
    <ligand>
        <name>Mg(2+)</name>
        <dbReference type="ChEBI" id="CHEBI:18420"/>
    </ligand>
</feature>
<feature type="binding site" evidence="1">
    <location>
        <position position="251"/>
    </location>
    <ligand>
        <name>Mg(2+)</name>
        <dbReference type="ChEBI" id="CHEBI:18420"/>
    </ligand>
</feature>
<feature type="binding site" evidence="1">
    <location>
        <position position="253"/>
    </location>
    <ligand>
        <name>Mg(2+)</name>
        <dbReference type="ChEBI" id="CHEBI:18420"/>
    </ligand>
</feature>
<feature type="modified residue" description="Phosphoserine" evidence="1">
    <location>
        <position position="104"/>
    </location>
</feature>
<keyword id="KW-0413">Isomerase</keyword>
<keyword id="KW-0460">Magnesium</keyword>
<keyword id="KW-0479">Metal-binding</keyword>
<keyword id="KW-0597">Phosphoprotein</keyword>
<organism>
    <name type="scientific">Psychrobacter sp. (strain PRwf-1)</name>
    <dbReference type="NCBI Taxonomy" id="349106"/>
    <lineage>
        <taxon>Bacteria</taxon>
        <taxon>Pseudomonadati</taxon>
        <taxon>Pseudomonadota</taxon>
        <taxon>Gammaproteobacteria</taxon>
        <taxon>Moraxellales</taxon>
        <taxon>Moraxellaceae</taxon>
        <taxon>Psychrobacter</taxon>
    </lineage>
</organism>
<accession>A5WEW6</accession>
<dbReference type="EC" id="5.4.2.10" evidence="1"/>
<dbReference type="EMBL" id="CP000713">
    <property type="protein sequence ID" value="ABQ94207.1"/>
    <property type="molecule type" value="Genomic_DNA"/>
</dbReference>
<dbReference type="SMR" id="A5WEW6"/>
<dbReference type="STRING" id="349106.PsycPRwf_1260"/>
<dbReference type="KEGG" id="prw:PsycPRwf_1260"/>
<dbReference type="eggNOG" id="COG1109">
    <property type="taxonomic scope" value="Bacteria"/>
</dbReference>
<dbReference type="HOGENOM" id="CLU_016950_7_0_6"/>
<dbReference type="GO" id="GO:0005829">
    <property type="term" value="C:cytosol"/>
    <property type="evidence" value="ECO:0007669"/>
    <property type="project" value="TreeGrafter"/>
</dbReference>
<dbReference type="GO" id="GO:0000287">
    <property type="term" value="F:magnesium ion binding"/>
    <property type="evidence" value="ECO:0007669"/>
    <property type="project" value="UniProtKB-UniRule"/>
</dbReference>
<dbReference type="GO" id="GO:0008966">
    <property type="term" value="F:phosphoglucosamine mutase activity"/>
    <property type="evidence" value="ECO:0007669"/>
    <property type="project" value="UniProtKB-UniRule"/>
</dbReference>
<dbReference type="GO" id="GO:0004615">
    <property type="term" value="F:phosphomannomutase activity"/>
    <property type="evidence" value="ECO:0007669"/>
    <property type="project" value="TreeGrafter"/>
</dbReference>
<dbReference type="GO" id="GO:0005975">
    <property type="term" value="P:carbohydrate metabolic process"/>
    <property type="evidence" value="ECO:0007669"/>
    <property type="project" value="InterPro"/>
</dbReference>
<dbReference type="GO" id="GO:0009252">
    <property type="term" value="P:peptidoglycan biosynthetic process"/>
    <property type="evidence" value="ECO:0007669"/>
    <property type="project" value="TreeGrafter"/>
</dbReference>
<dbReference type="GO" id="GO:0006048">
    <property type="term" value="P:UDP-N-acetylglucosamine biosynthetic process"/>
    <property type="evidence" value="ECO:0007669"/>
    <property type="project" value="TreeGrafter"/>
</dbReference>
<dbReference type="CDD" id="cd05802">
    <property type="entry name" value="GlmM"/>
    <property type="match status" value="1"/>
</dbReference>
<dbReference type="FunFam" id="3.30.310.50:FF:000001">
    <property type="entry name" value="Phosphoglucosamine mutase"/>
    <property type="match status" value="1"/>
</dbReference>
<dbReference type="FunFam" id="3.40.120.10:FF:000001">
    <property type="entry name" value="Phosphoglucosamine mutase"/>
    <property type="match status" value="1"/>
</dbReference>
<dbReference type="FunFam" id="3.40.120.10:FF:000003">
    <property type="entry name" value="Phosphoglucosamine mutase"/>
    <property type="match status" value="1"/>
</dbReference>
<dbReference type="Gene3D" id="3.40.120.10">
    <property type="entry name" value="Alpha-D-Glucose-1,6-Bisphosphate, subunit A, domain 3"/>
    <property type="match status" value="3"/>
</dbReference>
<dbReference type="Gene3D" id="3.30.310.50">
    <property type="entry name" value="Alpha-D-phosphohexomutase, C-terminal domain"/>
    <property type="match status" value="1"/>
</dbReference>
<dbReference type="HAMAP" id="MF_01554_B">
    <property type="entry name" value="GlmM_B"/>
    <property type="match status" value="1"/>
</dbReference>
<dbReference type="InterPro" id="IPR005844">
    <property type="entry name" value="A-D-PHexomutase_a/b/a-I"/>
</dbReference>
<dbReference type="InterPro" id="IPR016055">
    <property type="entry name" value="A-D-PHexomutase_a/b/a-I/II/III"/>
</dbReference>
<dbReference type="InterPro" id="IPR005845">
    <property type="entry name" value="A-D-PHexomutase_a/b/a-II"/>
</dbReference>
<dbReference type="InterPro" id="IPR005846">
    <property type="entry name" value="A-D-PHexomutase_a/b/a-III"/>
</dbReference>
<dbReference type="InterPro" id="IPR005843">
    <property type="entry name" value="A-D-PHexomutase_C"/>
</dbReference>
<dbReference type="InterPro" id="IPR036900">
    <property type="entry name" value="A-D-PHexomutase_C_sf"/>
</dbReference>
<dbReference type="InterPro" id="IPR016066">
    <property type="entry name" value="A-D-PHexomutase_CS"/>
</dbReference>
<dbReference type="InterPro" id="IPR005841">
    <property type="entry name" value="Alpha-D-phosphohexomutase_SF"/>
</dbReference>
<dbReference type="InterPro" id="IPR006352">
    <property type="entry name" value="GlmM_bact"/>
</dbReference>
<dbReference type="InterPro" id="IPR050060">
    <property type="entry name" value="Phosphoglucosamine_mutase"/>
</dbReference>
<dbReference type="NCBIfam" id="TIGR01455">
    <property type="entry name" value="glmM"/>
    <property type="match status" value="1"/>
</dbReference>
<dbReference type="NCBIfam" id="NF008139">
    <property type="entry name" value="PRK10887.1"/>
    <property type="match status" value="1"/>
</dbReference>
<dbReference type="PANTHER" id="PTHR42946:SF1">
    <property type="entry name" value="PHOSPHOGLUCOMUTASE (ALPHA-D-GLUCOSE-1,6-BISPHOSPHATE-DEPENDENT)"/>
    <property type="match status" value="1"/>
</dbReference>
<dbReference type="PANTHER" id="PTHR42946">
    <property type="entry name" value="PHOSPHOHEXOSE MUTASE"/>
    <property type="match status" value="1"/>
</dbReference>
<dbReference type="Pfam" id="PF02878">
    <property type="entry name" value="PGM_PMM_I"/>
    <property type="match status" value="1"/>
</dbReference>
<dbReference type="Pfam" id="PF02879">
    <property type="entry name" value="PGM_PMM_II"/>
    <property type="match status" value="1"/>
</dbReference>
<dbReference type="Pfam" id="PF02880">
    <property type="entry name" value="PGM_PMM_III"/>
    <property type="match status" value="1"/>
</dbReference>
<dbReference type="Pfam" id="PF00408">
    <property type="entry name" value="PGM_PMM_IV"/>
    <property type="match status" value="1"/>
</dbReference>
<dbReference type="PRINTS" id="PR00509">
    <property type="entry name" value="PGMPMM"/>
</dbReference>
<dbReference type="SUPFAM" id="SSF55957">
    <property type="entry name" value="Phosphoglucomutase, C-terminal domain"/>
    <property type="match status" value="1"/>
</dbReference>
<dbReference type="SUPFAM" id="SSF53738">
    <property type="entry name" value="Phosphoglucomutase, first 3 domains"/>
    <property type="match status" value="3"/>
</dbReference>
<dbReference type="PROSITE" id="PS00710">
    <property type="entry name" value="PGM_PMM"/>
    <property type="match status" value="1"/>
</dbReference>